<dbReference type="EMBL" id="X92441">
    <property type="protein sequence ID" value="CAA63177.1"/>
    <property type="molecule type" value="Genomic_DNA"/>
</dbReference>
<dbReference type="EMBL" id="Z75122">
    <property type="protein sequence ID" value="CAA99430.1"/>
    <property type="molecule type" value="Genomic_DNA"/>
</dbReference>
<dbReference type="EMBL" id="BK006948">
    <property type="protein sequence ID" value="DAA10986.1"/>
    <property type="molecule type" value="Genomic_DNA"/>
</dbReference>
<dbReference type="PIR" id="S60941">
    <property type="entry name" value="S60941"/>
</dbReference>
<dbReference type="RefSeq" id="NP_014857.3">
    <property type="nucleotide sequence ID" value="NM_001183633.3"/>
</dbReference>
<dbReference type="SMR" id="Q12282"/>
<dbReference type="BioGRID" id="34609">
    <property type="interactions" value="62"/>
</dbReference>
<dbReference type="DIP" id="DIP-5215N"/>
<dbReference type="FunCoup" id="Q12282">
    <property type="interactions" value="28"/>
</dbReference>
<dbReference type="IntAct" id="Q12282">
    <property type="interactions" value="2"/>
</dbReference>
<dbReference type="STRING" id="4932.YOR214C"/>
<dbReference type="GlyGen" id="Q12282">
    <property type="glycosylation" value="4 sites"/>
</dbReference>
<dbReference type="PaxDb" id="4932-YOR214C"/>
<dbReference type="EnsemblFungi" id="YOR214C_mRNA">
    <property type="protein sequence ID" value="YOR214C"/>
    <property type="gene ID" value="YOR214C"/>
</dbReference>
<dbReference type="GeneID" id="854389"/>
<dbReference type="KEGG" id="sce:YOR214C"/>
<dbReference type="AGR" id="SGD:S000005740"/>
<dbReference type="SGD" id="S000005740">
    <property type="gene designation" value="SPR2"/>
</dbReference>
<dbReference type="VEuPathDB" id="FungiDB:YOR214C"/>
<dbReference type="HOGENOM" id="CLU_108615_0_0_1"/>
<dbReference type="InParanoid" id="Q12282"/>
<dbReference type="OMA" id="HEIMEDS"/>
<dbReference type="OrthoDB" id="4061304at2759"/>
<dbReference type="BioCyc" id="YEAST:G3O-33716-MONOMER"/>
<dbReference type="BioGRID-ORCS" id="854389">
    <property type="hits" value="0 hits in 10 CRISPR screens"/>
</dbReference>
<dbReference type="PRO" id="PR:Q12282"/>
<dbReference type="Proteomes" id="UP000002311">
    <property type="component" value="Chromosome XV"/>
</dbReference>
<dbReference type="RNAct" id="Q12282">
    <property type="molecule type" value="protein"/>
</dbReference>
<dbReference type="GO" id="GO:0005576">
    <property type="term" value="C:extracellular region"/>
    <property type="evidence" value="ECO:0007669"/>
    <property type="project" value="UniProtKB-KW"/>
</dbReference>
<dbReference type="GO" id="GO:0009277">
    <property type="term" value="C:fungal-type cell wall"/>
    <property type="evidence" value="ECO:0000314"/>
    <property type="project" value="SGD"/>
</dbReference>
<dbReference type="GO" id="GO:0000324">
    <property type="term" value="C:fungal-type vacuole"/>
    <property type="evidence" value="ECO:0007005"/>
    <property type="project" value="SGD"/>
</dbReference>
<dbReference type="GO" id="GO:0098552">
    <property type="term" value="C:side of membrane"/>
    <property type="evidence" value="ECO:0007669"/>
    <property type="project" value="UniProtKB-KW"/>
</dbReference>
<dbReference type="GO" id="GO:0031160">
    <property type="term" value="C:spore wall"/>
    <property type="evidence" value="ECO:0007669"/>
    <property type="project" value="UniProtKB-SubCell"/>
</dbReference>
<keyword id="KW-0134">Cell wall</keyword>
<keyword id="KW-0325">Glycoprotein</keyword>
<keyword id="KW-0336">GPI-anchor</keyword>
<keyword id="KW-0449">Lipoprotein</keyword>
<keyword id="KW-0472">Membrane</keyword>
<keyword id="KW-1185">Reference proteome</keyword>
<keyword id="KW-0964">Secreted</keyword>
<keyword id="KW-0732">Signal</keyword>
<protein>
    <recommendedName>
        <fullName evidence="5">Sorulation-regulated protein 2</fullName>
    </recommendedName>
</protein>
<feature type="signal peptide" evidence="2">
    <location>
        <begin position="1"/>
        <end position="20"/>
    </location>
</feature>
<feature type="chain" id="PRO_0000237664" description="Sorulation-regulated protein 2">
    <location>
        <begin position="21"/>
        <end position="212"/>
    </location>
</feature>
<feature type="propeptide" id="PRO_0000237665" description="Removed in mature form" evidence="2">
    <location>
        <begin position="213"/>
        <end position="236"/>
    </location>
</feature>
<feature type="lipid moiety-binding region" description="GPI-anchor amidated asparagine" evidence="2">
    <location>
        <position position="212"/>
    </location>
</feature>
<feature type="glycosylation site" description="N-linked (GlcNAc...) asparagine" evidence="2">
    <location>
        <position position="155"/>
    </location>
</feature>
<feature type="glycosylation site" description="N-linked (GlcNAc...) asparagine" evidence="2">
    <location>
        <position position="160"/>
    </location>
</feature>
<feature type="glycosylation site" description="N-linked (GlcNAc...) asparagine" evidence="2">
    <location>
        <position position="203"/>
    </location>
</feature>
<feature type="glycosylation site" description="N-linked (GlcNAc...) asparagine" evidence="2">
    <location>
        <position position="212"/>
    </location>
</feature>
<sequence length="236" mass="26157">MLGLYLSSLFFAFFMAQVFATKYSITFTSDEYEEDETGQNEPGPLVFHLDKNSLPPALLNQMEFNPYLVLADLPEEPRAVDSQEHTDTVLASKSVIDFLLEDPLTIVEHKKFSQIESILHEIMEDSIQKKVGADEVFEEIPKPKIYAYEDILVTNMSIINNSEMPTSTATLTSTISYLSSTTSLALSTGVTSVEIFPTITPGNITTIGGYENSSSSLMPSMGILSFLFGLYLLLHP</sequence>
<gene>
    <name evidence="5" type="primary">SPR2</name>
    <name type="ordered locus">YOR214C</name>
    <name type="ORF">YO50-4</name>
</gene>
<comment type="subcellular location">
    <subcellularLocation>
        <location evidence="8">Spore wall</location>
    </subcellularLocation>
    <subcellularLocation>
        <location evidence="7 9">Secreted</location>
        <location evidence="7 9">Cell wall</location>
    </subcellularLocation>
    <subcellularLocation>
        <location evidence="6">Membrane</location>
        <topology evidence="6">Lipid-anchor</topology>
        <topology evidence="6">GPI-anchor</topology>
    </subcellularLocation>
</comment>
<comment type="induction">
    <text evidence="4">Expression increases during sporulation.</text>
</comment>
<comment type="PTM">
    <text evidence="1">The GPI-anchor is attached to the protein in the endoplasmic reticulum and serves to target the protein to the cell surface. There, the glucosamine-inositol phospholipid moiety is cleaved off and the GPI-modified mannoprotein is covalently attached via its lipidless GPI glycan remnant to the 1,6-beta-glucan of the outer cell wall layer (By similarity).</text>
</comment>
<comment type="PTM">
    <text evidence="3">N-glycosylated.</text>
</comment>
<name>SPR2_YEAST</name>
<evidence type="ECO:0000250" key="1"/>
<evidence type="ECO:0000255" key="2"/>
<evidence type="ECO:0000269" key="3">
    <source>
    </source>
</evidence>
<evidence type="ECO:0000269" key="4">
    <source>
    </source>
</evidence>
<evidence type="ECO:0000303" key="5">
    <source>
    </source>
</evidence>
<evidence type="ECO:0000305" key="6"/>
<evidence type="ECO:0000305" key="7">
    <source>
    </source>
</evidence>
<evidence type="ECO:0000305" key="8">
    <source>
    </source>
</evidence>
<evidence type="ECO:0000305" key="9">
    <source>
    </source>
</evidence>
<reference key="1">
    <citation type="journal article" date="1996" name="Yeast">
        <title>Sequence and analysis of a 33 kb fragment from the right arm of chromosome XV of the yeast Saccharomyces cerevisiae.</title>
        <authorList>
            <person name="Galisson F."/>
            <person name="Dujon B."/>
        </authorList>
    </citation>
    <scope>NUCLEOTIDE SEQUENCE [GENOMIC DNA]</scope>
    <source>
        <strain>ATCC 96604 / S288c / FY1679</strain>
    </source>
</reference>
<reference key="2">
    <citation type="journal article" date="1997" name="Nature">
        <title>The nucleotide sequence of Saccharomyces cerevisiae chromosome XV.</title>
        <authorList>
            <person name="Dujon B."/>
            <person name="Albermann K."/>
            <person name="Aldea M."/>
            <person name="Alexandraki D."/>
            <person name="Ansorge W."/>
            <person name="Arino J."/>
            <person name="Benes V."/>
            <person name="Bohn C."/>
            <person name="Bolotin-Fukuhara M."/>
            <person name="Bordonne R."/>
            <person name="Boyer J."/>
            <person name="Camasses A."/>
            <person name="Casamayor A."/>
            <person name="Casas C."/>
            <person name="Cheret G."/>
            <person name="Cziepluch C."/>
            <person name="Daignan-Fornier B."/>
            <person name="Dang V.-D."/>
            <person name="de Haan M."/>
            <person name="Delius H."/>
            <person name="Durand P."/>
            <person name="Fairhead C."/>
            <person name="Feldmann H."/>
            <person name="Gaillon L."/>
            <person name="Galisson F."/>
            <person name="Gamo F.-J."/>
            <person name="Gancedo C."/>
            <person name="Goffeau A."/>
            <person name="Goulding S.E."/>
            <person name="Grivell L.A."/>
            <person name="Habbig B."/>
            <person name="Hand N.J."/>
            <person name="Hani J."/>
            <person name="Hattenhorst U."/>
            <person name="Hebling U."/>
            <person name="Hernando Y."/>
            <person name="Herrero E."/>
            <person name="Heumann K."/>
            <person name="Hiesel R."/>
            <person name="Hilger F."/>
            <person name="Hofmann B."/>
            <person name="Hollenberg C.P."/>
            <person name="Hughes B."/>
            <person name="Jauniaux J.-C."/>
            <person name="Kalogeropoulos A."/>
            <person name="Katsoulou C."/>
            <person name="Kordes E."/>
            <person name="Lafuente M.J."/>
            <person name="Landt O."/>
            <person name="Louis E.J."/>
            <person name="Maarse A.C."/>
            <person name="Madania A."/>
            <person name="Mannhaupt G."/>
            <person name="Marck C."/>
            <person name="Martin R.P."/>
            <person name="Mewes H.-W."/>
            <person name="Michaux G."/>
            <person name="Paces V."/>
            <person name="Parle-McDermott A.G."/>
            <person name="Pearson B.M."/>
            <person name="Perrin A."/>
            <person name="Pettersson B."/>
            <person name="Poch O."/>
            <person name="Pohl T.M."/>
            <person name="Poirey R."/>
            <person name="Portetelle D."/>
            <person name="Pujol A."/>
            <person name="Purnelle B."/>
            <person name="Ramezani Rad M."/>
            <person name="Rechmann S."/>
            <person name="Schwager C."/>
            <person name="Schweizer M."/>
            <person name="Sor F."/>
            <person name="Sterky F."/>
            <person name="Tarassov I.A."/>
            <person name="Teodoru C."/>
            <person name="Tettelin H."/>
            <person name="Thierry A."/>
            <person name="Tobiasch E."/>
            <person name="Tzermia M."/>
            <person name="Uhlen M."/>
            <person name="Unseld M."/>
            <person name="Valens M."/>
            <person name="Vandenbol M."/>
            <person name="Vetter I."/>
            <person name="Vlcek C."/>
            <person name="Voet M."/>
            <person name="Volckaert G."/>
            <person name="Voss H."/>
            <person name="Wambutt R."/>
            <person name="Wedler H."/>
            <person name="Wiemann S."/>
            <person name="Winsor B."/>
            <person name="Wolfe K.H."/>
            <person name="Zollner A."/>
            <person name="Zumstein E."/>
            <person name="Kleine K."/>
        </authorList>
    </citation>
    <scope>NUCLEOTIDE SEQUENCE [LARGE SCALE GENOMIC DNA]</scope>
    <source>
        <strain>ATCC 204508 / S288c</strain>
    </source>
</reference>
<reference key="3">
    <citation type="journal article" date="2014" name="G3 (Bethesda)">
        <title>The reference genome sequence of Saccharomyces cerevisiae: Then and now.</title>
        <authorList>
            <person name="Engel S.R."/>
            <person name="Dietrich F.S."/>
            <person name="Fisk D.G."/>
            <person name="Binkley G."/>
            <person name="Balakrishnan R."/>
            <person name="Costanzo M.C."/>
            <person name="Dwight S.S."/>
            <person name="Hitz B.C."/>
            <person name="Karra K."/>
            <person name="Nash R.S."/>
            <person name="Weng S."/>
            <person name="Wong E.D."/>
            <person name="Lloyd P."/>
            <person name="Skrzypek M.S."/>
            <person name="Miyasato S.R."/>
            <person name="Simison M."/>
            <person name="Cherry J.M."/>
        </authorList>
    </citation>
    <scope>GENOME REANNOTATION</scope>
    <source>
        <strain>ATCC 204508 / S288c</strain>
    </source>
</reference>
<reference key="4">
    <citation type="journal article" date="1987" name="Mol. Gen. Genet.">
        <title>Transcriptional regulation of sporulation genes in yeast.</title>
        <authorList>
            <person name="Holaway B.L."/>
            <person name="Kao G."/>
            <person name="Finn M.C."/>
            <person name="Clancy M.J."/>
        </authorList>
    </citation>
    <scope>IDENTIFICATION</scope>
    <scope>INDUCTION</scope>
</reference>
<reference key="5">
    <citation type="journal article" date="1998" name="Mol. Gen. Genet.">
        <title>Screening for glycosylphosphatidylinositol (GPI)-dependent cell wall proteins in Saccharomyces cerevisiae.</title>
        <authorList>
            <person name="Hamada K."/>
            <person name="Fukuchi S."/>
            <person name="Arisawa M."/>
            <person name="Baba M."/>
            <person name="Kitada K."/>
        </authorList>
    </citation>
    <scope>SUBCELLULAR LOCATION</scope>
</reference>
<reference key="6">
    <citation type="journal article" date="1998" name="Science">
        <title>The transcriptional program of sporulation in budding yeast.</title>
        <authorList>
            <person name="Chu S."/>
            <person name="DeRisi J."/>
            <person name="Eisen M."/>
            <person name="Mulholland J."/>
            <person name="Botstein D."/>
            <person name="Brown P.O."/>
            <person name="Herskowitz I."/>
        </authorList>
    </citation>
    <scope>INDUCTION</scope>
</reference>
<reference key="7">
    <citation type="journal article" date="1999" name="J. Bacteriol.">
        <title>Amino acid residues in the omega-minus region participate in cellular localization of yeast glycosylphosphatidylinositol-attached proteins.</title>
        <authorList>
            <person name="Hamada K."/>
            <person name="Terashima H."/>
            <person name="Arisawa M."/>
            <person name="Yabuki N."/>
            <person name="Kitada K."/>
        </authorList>
    </citation>
    <scope>SUBCELLULAR LOCATION</scope>
</reference>
<reference key="8">
    <citation type="journal article" date="2009" name="Mol. Syst. Biol.">
        <title>Global analysis of the glycoproteome in Saccharomyces cerevisiae reveals new roles for protein glycosylation in eukaryotes.</title>
        <authorList>
            <person name="Kung L.A."/>
            <person name="Tao S.-C."/>
            <person name="Qian J."/>
            <person name="Smith M.G."/>
            <person name="Snyder M."/>
            <person name="Zhu H."/>
        </authorList>
    </citation>
    <scope>GLYCOSYLATION [LARGE SCALE ANALYSIS]</scope>
</reference>
<accession>Q12282</accession>
<accession>D6W2S0</accession>
<organism>
    <name type="scientific">Saccharomyces cerevisiae (strain ATCC 204508 / S288c)</name>
    <name type="common">Baker's yeast</name>
    <dbReference type="NCBI Taxonomy" id="559292"/>
    <lineage>
        <taxon>Eukaryota</taxon>
        <taxon>Fungi</taxon>
        <taxon>Dikarya</taxon>
        <taxon>Ascomycota</taxon>
        <taxon>Saccharomycotina</taxon>
        <taxon>Saccharomycetes</taxon>
        <taxon>Saccharomycetales</taxon>
        <taxon>Saccharomycetaceae</taxon>
        <taxon>Saccharomyces</taxon>
    </lineage>
</organism>
<proteinExistence type="evidence at protein level"/>